<gene>
    <name evidence="1" type="primary">grpE</name>
    <name type="ordered locus">SeHA_C2897</name>
</gene>
<accession>B4TE57</accession>
<comment type="function">
    <text evidence="1">Participates actively in the response to hyperosmotic and heat shock by preventing the aggregation of stress-denatured proteins, in association with DnaK and GrpE. It is the nucleotide exchange factor for DnaK and may function as a thermosensor. Unfolded proteins bind initially to DnaJ; upon interaction with the DnaJ-bound protein, DnaK hydrolyzes its bound ATP, resulting in the formation of a stable complex. GrpE releases ADP from DnaK; ATP binding to DnaK triggers the release of the substrate protein, thus completing the reaction cycle. Several rounds of ATP-dependent interactions between DnaJ, DnaK and GrpE are required for fully efficient folding.</text>
</comment>
<comment type="subunit">
    <text evidence="1">Homodimer.</text>
</comment>
<comment type="subcellular location">
    <subcellularLocation>
        <location evidence="1">Cytoplasm</location>
    </subcellularLocation>
</comment>
<comment type="similarity">
    <text evidence="1">Belongs to the GrpE family.</text>
</comment>
<dbReference type="EMBL" id="CP001120">
    <property type="protein sequence ID" value="ACF69351.1"/>
    <property type="molecule type" value="Genomic_DNA"/>
</dbReference>
<dbReference type="RefSeq" id="WP_001518875.1">
    <property type="nucleotide sequence ID" value="NC_011083.1"/>
</dbReference>
<dbReference type="SMR" id="B4TE57"/>
<dbReference type="KEGG" id="seh:SeHA_C2897"/>
<dbReference type="HOGENOM" id="CLU_057217_6_0_6"/>
<dbReference type="Proteomes" id="UP000001866">
    <property type="component" value="Chromosome"/>
</dbReference>
<dbReference type="GO" id="GO:0005829">
    <property type="term" value="C:cytosol"/>
    <property type="evidence" value="ECO:0007669"/>
    <property type="project" value="TreeGrafter"/>
</dbReference>
<dbReference type="GO" id="GO:0000774">
    <property type="term" value="F:adenyl-nucleotide exchange factor activity"/>
    <property type="evidence" value="ECO:0007669"/>
    <property type="project" value="InterPro"/>
</dbReference>
<dbReference type="GO" id="GO:0042803">
    <property type="term" value="F:protein homodimerization activity"/>
    <property type="evidence" value="ECO:0007669"/>
    <property type="project" value="InterPro"/>
</dbReference>
<dbReference type="GO" id="GO:0051087">
    <property type="term" value="F:protein-folding chaperone binding"/>
    <property type="evidence" value="ECO:0007669"/>
    <property type="project" value="InterPro"/>
</dbReference>
<dbReference type="GO" id="GO:0051082">
    <property type="term" value="F:unfolded protein binding"/>
    <property type="evidence" value="ECO:0007669"/>
    <property type="project" value="TreeGrafter"/>
</dbReference>
<dbReference type="GO" id="GO:0006457">
    <property type="term" value="P:protein folding"/>
    <property type="evidence" value="ECO:0007669"/>
    <property type="project" value="InterPro"/>
</dbReference>
<dbReference type="CDD" id="cd00446">
    <property type="entry name" value="GrpE"/>
    <property type="match status" value="1"/>
</dbReference>
<dbReference type="FunFam" id="2.30.22.10:FF:000001">
    <property type="entry name" value="Protein GrpE"/>
    <property type="match status" value="1"/>
</dbReference>
<dbReference type="FunFam" id="3.90.20.20:FF:000001">
    <property type="entry name" value="Protein GrpE"/>
    <property type="match status" value="1"/>
</dbReference>
<dbReference type="Gene3D" id="3.90.20.20">
    <property type="match status" value="1"/>
</dbReference>
<dbReference type="Gene3D" id="2.30.22.10">
    <property type="entry name" value="Head domain of nucleotide exchange factor GrpE"/>
    <property type="match status" value="1"/>
</dbReference>
<dbReference type="HAMAP" id="MF_01151">
    <property type="entry name" value="GrpE"/>
    <property type="match status" value="1"/>
</dbReference>
<dbReference type="InterPro" id="IPR000740">
    <property type="entry name" value="GrpE"/>
</dbReference>
<dbReference type="InterPro" id="IPR013805">
    <property type="entry name" value="GrpE_coiled_coil"/>
</dbReference>
<dbReference type="InterPro" id="IPR009012">
    <property type="entry name" value="GrpE_head"/>
</dbReference>
<dbReference type="NCBIfam" id="NF007655">
    <property type="entry name" value="PRK10325.1"/>
    <property type="match status" value="1"/>
</dbReference>
<dbReference type="NCBIfam" id="NF010738">
    <property type="entry name" value="PRK14140.1"/>
    <property type="match status" value="1"/>
</dbReference>
<dbReference type="NCBIfam" id="NF010748">
    <property type="entry name" value="PRK14150.1"/>
    <property type="match status" value="1"/>
</dbReference>
<dbReference type="PANTHER" id="PTHR21237">
    <property type="entry name" value="GRPE PROTEIN"/>
    <property type="match status" value="1"/>
</dbReference>
<dbReference type="PANTHER" id="PTHR21237:SF23">
    <property type="entry name" value="GRPE PROTEIN HOMOLOG, MITOCHONDRIAL"/>
    <property type="match status" value="1"/>
</dbReference>
<dbReference type="Pfam" id="PF01025">
    <property type="entry name" value="GrpE"/>
    <property type="match status" value="1"/>
</dbReference>
<dbReference type="PRINTS" id="PR00773">
    <property type="entry name" value="GRPEPROTEIN"/>
</dbReference>
<dbReference type="SUPFAM" id="SSF58014">
    <property type="entry name" value="Coiled-coil domain of nucleotide exchange factor GrpE"/>
    <property type="match status" value="1"/>
</dbReference>
<dbReference type="SUPFAM" id="SSF51064">
    <property type="entry name" value="Head domain of nucleotide exchange factor GrpE"/>
    <property type="match status" value="1"/>
</dbReference>
<dbReference type="PROSITE" id="PS01071">
    <property type="entry name" value="GRPE"/>
    <property type="match status" value="1"/>
</dbReference>
<feature type="chain" id="PRO_1000137611" description="Protein GrpE">
    <location>
        <begin position="1"/>
        <end position="196"/>
    </location>
</feature>
<feature type="region of interest" description="Disordered" evidence="2">
    <location>
        <begin position="1"/>
        <end position="40"/>
    </location>
</feature>
<name>GRPE_SALHS</name>
<keyword id="KW-0143">Chaperone</keyword>
<keyword id="KW-0963">Cytoplasm</keyword>
<keyword id="KW-0346">Stress response</keyword>
<proteinExistence type="inferred from homology"/>
<reference key="1">
    <citation type="journal article" date="2011" name="J. Bacteriol.">
        <title>Comparative genomics of 28 Salmonella enterica isolates: evidence for CRISPR-mediated adaptive sublineage evolution.</title>
        <authorList>
            <person name="Fricke W.F."/>
            <person name="Mammel M.K."/>
            <person name="McDermott P.F."/>
            <person name="Tartera C."/>
            <person name="White D.G."/>
            <person name="Leclerc J.E."/>
            <person name="Ravel J."/>
            <person name="Cebula T.A."/>
        </authorList>
    </citation>
    <scope>NUCLEOTIDE SEQUENCE [LARGE SCALE GENOMIC DNA]</scope>
    <source>
        <strain>SL476</strain>
    </source>
</reference>
<evidence type="ECO:0000255" key="1">
    <source>
        <dbReference type="HAMAP-Rule" id="MF_01151"/>
    </source>
</evidence>
<evidence type="ECO:0000256" key="2">
    <source>
        <dbReference type="SAM" id="MobiDB-lite"/>
    </source>
</evidence>
<protein>
    <recommendedName>
        <fullName evidence="1">Protein GrpE</fullName>
    </recommendedName>
    <alternativeName>
        <fullName evidence="1">HSP-70 cofactor</fullName>
    </alternativeName>
</protein>
<sequence>MSSKEQKTPEGQAPEEIIMDQHEEVEAVEPNDSAEQVDPRDEKIANLEVQLAEAQTRERDTVLRIKAEMENLRRRTEQDIEKAHKFALEKFVNELLPVIDSLDRALEVADKANPDMAAMVEGIELTLKSMLDVVRKFGVEVIAETNVPLDPNVHQAIAMVESEEVPAGNVLGIMQKGYTLNGRTIRAAMVTVAKAK</sequence>
<organism>
    <name type="scientific">Salmonella heidelberg (strain SL476)</name>
    <dbReference type="NCBI Taxonomy" id="454169"/>
    <lineage>
        <taxon>Bacteria</taxon>
        <taxon>Pseudomonadati</taxon>
        <taxon>Pseudomonadota</taxon>
        <taxon>Gammaproteobacteria</taxon>
        <taxon>Enterobacterales</taxon>
        <taxon>Enterobacteriaceae</taxon>
        <taxon>Salmonella</taxon>
    </lineage>
</organism>